<comment type="function">
    <text evidence="1">Nucleoside triphosphate pyrophosphatase. May have a dual role in cell division arrest and in preventing the incorporation of modified nucleotides into cellular nucleic acids.</text>
</comment>
<comment type="catalytic activity">
    <reaction evidence="1">
        <text>a ribonucleoside 5'-triphosphate + H2O = a ribonucleoside 5'-phosphate + diphosphate + H(+)</text>
        <dbReference type="Rhea" id="RHEA:23996"/>
        <dbReference type="ChEBI" id="CHEBI:15377"/>
        <dbReference type="ChEBI" id="CHEBI:15378"/>
        <dbReference type="ChEBI" id="CHEBI:33019"/>
        <dbReference type="ChEBI" id="CHEBI:58043"/>
        <dbReference type="ChEBI" id="CHEBI:61557"/>
        <dbReference type="EC" id="3.6.1.9"/>
    </reaction>
</comment>
<comment type="catalytic activity">
    <reaction evidence="1">
        <text>a 2'-deoxyribonucleoside 5'-triphosphate + H2O = a 2'-deoxyribonucleoside 5'-phosphate + diphosphate + H(+)</text>
        <dbReference type="Rhea" id="RHEA:44644"/>
        <dbReference type="ChEBI" id="CHEBI:15377"/>
        <dbReference type="ChEBI" id="CHEBI:15378"/>
        <dbReference type="ChEBI" id="CHEBI:33019"/>
        <dbReference type="ChEBI" id="CHEBI:61560"/>
        <dbReference type="ChEBI" id="CHEBI:65317"/>
        <dbReference type="EC" id="3.6.1.9"/>
    </reaction>
</comment>
<comment type="cofactor">
    <cofactor evidence="1">
        <name>a divalent metal cation</name>
        <dbReference type="ChEBI" id="CHEBI:60240"/>
    </cofactor>
</comment>
<comment type="subcellular location">
    <subcellularLocation>
        <location evidence="1">Cytoplasm</location>
    </subcellularLocation>
</comment>
<comment type="similarity">
    <text evidence="1">Belongs to the Maf family.</text>
</comment>
<gene>
    <name type="ordered locus">MAE_24240</name>
</gene>
<feature type="chain" id="PRO_1000146292" description="Nucleoside triphosphate pyrophosphatase">
    <location>
        <begin position="1"/>
        <end position="195"/>
    </location>
</feature>
<feature type="active site" description="Proton acceptor" evidence="1">
    <location>
        <position position="70"/>
    </location>
</feature>
<keyword id="KW-0963">Cytoplasm</keyword>
<keyword id="KW-0378">Hydrolase</keyword>
<keyword id="KW-0546">Nucleotide metabolism</keyword>
<name>NTPP_MICAN</name>
<dbReference type="EC" id="3.6.1.9" evidence="1"/>
<dbReference type="EMBL" id="AP009552">
    <property type="protein sequence ID" value="BAG02246.1"/>
    <property type="molecule type" value="Genomic_DNA"/>
</dbReference>
<dbReference type="RefSeq" id="WP_012265567.1">
    <property type="nucleotide sequence ID" value="NC_010296.1"/>
</dbReference>
<dbReference type="SMR" id="B0JH94"/>
<dbReference type="STRING" id="449447.MAE_24240"/>
<dbReference type="PaxDb" id="449447-MAE_24240"/>
<dbReference type="EnsemblBacteria" id="BAG02246">
    <property type="protein sequence ID" value="BAG02246"/>
    <property type="gene ID" value="MAE_24240"/>
</dbReference>
<dbReference type="KEGG" id="mar:MAE_24240"/>
<dbReference type="PATRIC" id="fig|449447.4.peg.2220"/>
<dbReference type="eggNOG" id="COG0424">
    <property type="taxonomic scope" value="Bacteria"/>
</dbReference>
<dbReference type="HOGENOM" id="CLU_040416_1_2_3"/>
<dbReference type="BioCyc" id="MAER449447:MAE_RS10580-MONOMER"/>
<dbReference type="Proteomes" id="UP000001510">
    <property type="component" value="Chromosome"/>
</dbReference>
<dbReference type="GO" id="GO:0005737">
    <property type="term" value="C:cytoplasm"/>
    <property type="evidence" value="ECO:0007669"/>
    <property type="project" value="UniProtKB-SubCell"/>
</dbReference>
<dbReference type="GO" id="GO:0047429">
    <property type="term" value="F:nucleoside triphosphate diphosphatase activity"/>
    <property type="evidence" value="ECO:0007669"/>
    <property type="project" value="UniProtKB-EC"/>
</dbReference>
<dbReference type="GO" id="GO:0009117">
    <property type="term" value="P:nucleotide metabolic process"/>
    <property type="evidence" value="ECO:0007669"/>
    <property type="project" value="UniProtKB-KW"/>
</dbReference>
<dbReference type="CDD" id="cd00555">
    <property type="entry name" value="Maf"/>
    <property type="match status" value="1"/>
</dbReference>
<dbReference type="Gene3D" id="3.90.950.10">
    <property type="match status" value="1"/>
</dbReference>
<dbReference type="HAMAP" id="MF_00528">
    <property type="entry name" value="Maf"/>
    <property type="match status" value="1"/>
</dbReference>
<dbReference type="InterPro" id="IPR029001">
    <property type="entry name" value="ITPase-like_fam"/>
</dbReference>
<dbReference type="InterPro" id="IPR003697">
    <property type="entry name" value="Maf-like"/>
</dbReference>
<dbReference type="NCBIfam" id="TIGR00172">
    <property type="entry name" value="maf"/>
    <property type="match status" value="1"/>
</dbReference>
<dbReference type="PANTHER" id="PTHR43213">
    <property type="entry name" value="BIFUNCTIONAL DTTP/UTP PYROPHOSPHATASE/METHYLTRANSFERASE PROTEIN-RELATED"/>
    <property type="match status" value="1"/>
</dbReference>
<dbReference type="PANTHER" id="PTHR43213:SF5">
    <property type="entry name" value="BIFUNCTIONAL DTTP_UTP PYROPHOSPHATASE_METHYLTRANSFERASE PROTEIN-RELATED"/>
    <property type="match status" value="1"/>
</dbReference>
<dbReference type="Pfam" id="PF02545">
    <property type="entry name" value="Maf"/>
    <property type="match status" value="1"/>
</dbReference>
<dbReference type="PIRSF" id="PIRSF006305">
    <property type="entry name" value="Maf"/>
    <property type="match status" value="1"/>
</dbReference>
<dbReference type="SUPFAM" id="SSF52972">
    <property type="entry name" value="ITPase-like"/>
    <property type="match status" value="1"/>
</dbReference>
<protein>
    <recommendedName>
        <fullName evidence="1">Nucleoside triphosphate pyrophosphatase</fullName>
        <ecNumber evidence="1">3.6.1.9</ecNumber>
    </recommendedName>
    <alternativeName>
        <fullName evidence="1">Nucleotide pyrophosphatase</fullName>
        <shortName evidence="1">Nucleotide PPase</shortName>
    </alternativeName>
</protein>
<sequence>MSIPLILASASPARKKLLQMVGIDPIVRVSNFDESTINADDTLHLVQTLAQCKAQTIAPKFDTGLILGCDSVLEVAGEVYGKPKDKSEAIERWQKMRGQVGTLYTGHALIDRVNNQTLTRCGITKVHFANISDETIIAYVDTEEPLKCAGCFALEGKGGLFVERLEGCHSNVIGLSLPLFRQMLTDFGYQITDFW</sequence>
<reference key="1">
    <citation type="journal article" date="2007" name="DNA Res.">
        <title>Complete genomic structure of the bloom-forming toxic cyanobacterium Microcystis aeruginosa NIES-843.</title>
        <authorList>
            <person name="Kaneko T."/>
            <person name="Nakajima N."/>
            <person name="Okamoto S."/>
            <person name="Suzuki I."/>
            <person name="Tanabe Y."/>
            <person name="Tamaoki M."/>
            <person name="Nakamura Y."/>
            <person name="Kasai F."/>
            <person name="Watanabe A."/>
            <person name="Kawashima K."/>
            <person name="Kishida Y."/>
            <person name="Ono A."/>
            <person name="Shimizu Y."/>
            <person name="Takahashi C."/>
            <person name="Minami C."/>
            <person name="Fujishiro T."/>
            <person name="Kohara M."/>
            <person name="Katoh M."/>
            <person name="Nakazaki N."/>
            <person name="Nakayama S."/>
            <person name="Yamada M."/>
            <person name="Tabata S."/>
            <person name="Watanabe M.M."/>
        </authorList>
    </citation>
    <scope>NUCLEOTIDE SEQUENCE [LARGE SCALE GENOMIC DNA]</scope>
    <source>
        <strain>NIES-843 / IAM M-247</strain>
    </source>
</reference>
<organism>
    <name type="scientific">Microcystis aeruginosa (strain NIES-843 / IAM M-2473)</name>
    <dbReference type="NCBI Taxonomy" id="449447"/>
    <lineage>
        <taxon>Bacteria</taxon>
        <taxon>Bacillati</taxon>
        <taxon>Cyanobacteriota</taxon>
        <taxon>Cyanophyceae</taxon>
        <taxon>Oscillatoriophycideae</taxon>
        <taxon>Chroococcales</taxon>
        <taxon>Microcystaceae</taxon>
        <taxon>Microcystis</taxon>
    </lineage>
</organism>
<proteinExistence type="inferred from homology"/>
<accession>B0JH94</accession>
<evidence type="ECO:0000255" key="1">
    <source>
        <dbReference type="HAMAP-Rule" id="MF_00528"/>
    </source>
</evidence>